<reference key="1">
    <citation type="journal article" date="2001" name="Cladistics">
        <title>Mitochondrial DNA evidence and evolution in Varanoidea (Squamata).</title>
        <authorList>
            <person name="Ast J.C."/>
        </authorList>
    </citation>
    <scope>NUCLEOTIDE SEQUENCE [GENOMIC DNA]</scope>
    <source>
        <strain>Isolate WAM R107008</strain>
    </source>
</reference>
<sequence>MNPIINLILLSSMIAGTILTMSSHHWVSAWLGLELNTLAIIPIISKTHHPRATEASTKYFLIQAASSALFLLSGITNAYSHGTWDMAHLTNTPSKIMLSVALATKLGLAPIHFWLPEVLQGTPMITALIITTWQKIAPMALLITTWNLIPPTITLIMGLLSTIIGGLGGLNQTQLRKMMAYSSIAHLGWMITITTITPSLALFNLTLYILLTTSTMLIMHLTLSKTLQNTMLIYSYSPTTASLFLLSLLSLGGLPPLSGFSPKWLILQELTTHHLTPLALLMAITALLSLMFYLRTSYISTMTIPPSTTPLKNTWRLKSNSNTSLLSSLILLSLFLLPITPLMIQ</sequence>
<geneLocation type="mitochondrion"/>
<feature type="chain" id="PRO_0000117646" description="NADH-ubiquinone oxidoreductase chain 2">
    <location>
        <begin position="1"/>
        <end position="345"/>
    </location>
</feature>
<feature type="transmembrane region" description="Helical" evidence="2">
    <location>
        <begin position="1"/>
        <end position="21"/>
    </location>
</feature>
<feature type="transmembrane region" description="Helical" evidence="2">
    <location>
        <begin position="25"/>
        <end position="45"/>
    </location>
</feature>
<feature type="transmembrane region" description="Helical" evidence="2">
    <location>
        <begin position="59"/>
        <end position="79"/>
    </location>
</feature>
<feature type="transmembrane region" description="Helical" evidence="2">
    <location>
        <begin position="96"/>
        <end position="116"/>
    </location>
</feature>
<feature type="transmembrane region" description="Helical" evidence="2">
    <location>
        <begin position="123"/>
        <end position="143"/>
    </location>
</feature>
<feature type="transmembrane region" description="Helical" evidence="2">
    <location>
        <begin position="148"/>
        <end position="168"/>
    </location>
</feature>
<feature type="transmembrane region" description="Helical" evidence="2">
    <location>
        <begin position="191"/>
        <end position="211"/>
    </location>
</feature>
<feature type="transmembrane region" description="Helical" evidence="2">
    <location>
        <begin position="240"/>
        <end position="260"/>
    </location>
</feature>
<feature type="transmembrane region" description="Helical" evidence="2">
    <location>
        <begin position="274"/>
        <end position="294"/>
    </location>
</feature>
<feature type="transmembrane region" description="Helical" evidence="2">
    <location>
        <begin position="324"/>
        <end position="344"/>
    </location>
</feature>
<name>NU2M_VARTI</name>
<comment type="function">
    <text evidence="1">Core subunit of the mitochondrial membrane respiratory chain NADH dehydrogenase (Complex I) that is believed to belong to the minimal assembly required for catalysis. Complex I functions in the transfer of electrons from NADH to the respiratory chain. The immediate electron acceptor for the enzyme is believed to be ubiquinone (By similarity).</text>
</comment>
<comment type="catalytic activity">
    <reaction>
        <text>a ubiquinone + NADH + 5 H(+)(in) = a ubiquinol + NAD(+) + 4 H(+)(out)</text>
        <dbReference type="Rhea" id="RHEA:29091"/>
        <dbReference type="Rhea" id="RHEA-COMP:9565"/>
        <dbReference type="Rhea" id="RHEA-COMP:9566"/>
        <dbReference type="ChEBI" id="CHEBI:15378"/>
        <dbReference type="ChEBI" id="CHEBI:16389"/>
        <dbReference type="ChEBI" id="CHEBI:17976"/>
        <dbReference type="ChEBI" id="CHEBI:57540"/>
        <dbReference type="ChEBI" id="CHEBI:57945"/>
        <dbReference type="EC" id="7.1.1.2"/>
    </reaction>
</comment>
<comment type="subcellular location">
    <subcellularLocation>
        <location>Mitochondrion inner membrane</location>
        <topology>Multi-pass membrane protein</topology>
    </subcellularLocation>
</comment>
<comment type="similarity">
    <text evidence="3">Belongs to the complex I subunit 2 family.</text>
</comment>
<proteinExistence type="inferred from homology"/>
<keyword id="KW-0249">Electron transport</keyword>
<keyword id="KW-0472">Membrane</keyword>
<keyword id="KW-0496">Mitochondrion</keyword>
<keyword id="KW-0999">Mitochondrion inner membrane</keyword>
<keyword id="KW-0520">NAD</keyword>
<keyword id="KW-0679">Respiratory chain</keyword>
<keyword id="KW-1278">Translocase</keyword>
<keyword id="KW-0812">Transmembrane</keyword>
<keyword id="KW-1133">Transmembrane helix</keyword>
<keyword id="KW-0813">Transport</keyword>
<keyword id="KW-0830">Ubiquinone</keyword>
<dbReference type="EC" id="7.1.1.2"/>
<dbReference type="EMBL" id="AF407532">
    <property type="protein sequence ID" value="AAL10147.1"/>
    <property type="molecule type" value="Genomic_DNA"/>
</dbReference>
<dbReference type="SMR" id="Q94V92"/>
<dbReference type="GO" id="GO:0005743">
    <property type="term" value="C:mitochondrial inner membrane"/>
    <property type="evidence" value="ECO:0007669"/>
    <property type="project" value="UniProtKB-SubCell"/>
</dbReference>
<dbReference type="GO" id="GO:0008137">
    <property type="term" value="F:NADH dehydrogenase (ubiquinone) activity"/>
    <property type="evidence" value="ECO:0007669"/>
    <property type="project" value="UniProtKB-EC"/>
</dbReference>
<dbReference type="GO" id="GO:0006120">
    <property type="term" value="P:mitochondrial electron transport, NADH to ubiquinone"/>
    <property type="evidence" value="ECO:0007669"/>
    <property type="project" value="InterPro"/>
</dbReference>
<dbReference type="InterPro" id="IPR050175">
    <property type="entry name" value="Complex_I_Subunit_2"/>
</dbReference>
<dbReference type="InterPro" id="IPR010933">
    <property type="entry name" value="NADH_DH_su2_C"/>
</dbReference>
<dbReference type="InterPro" id="IPR003917">
    <property type="entry name" value="NADH_UbQ_OxRdtase_chain2"/>
</dbReference>
<dbReference type="InterPro" id="IPR001750">
    <property type="entry name" value="ND/Mrp_TM"/>
</dbReference>
<dbReference type="PANTHER" id="PTHR46552">
    <property type="entry name" value="NADH-UBIQUINONE OXIDOREDUCTASE CHAIN 2"/>
    <property type="match status" value="1"/>
</dbReference>
<dbReference type="PANTHER" id="PTHR46552:SF1">
    <property type="entry name" value="NADH-UBIQUINONE OXIDOREDUCTASE CHAIN 2"/>
    <property type="match status" value="1"/>
</dbReference>
<dbReference type="Pfam" id="PF06444">
    <property type="entry name" value="NADH_dehy_S2_C"/>
    <property type="match status" value="1"/>
</dbReference>
<dbReference type="Pfam" id="PF00361">
    <property type="entry name" value="Proton_antipo_M"/>
    <property type="match status" value="1"/>
</dbReference>
<dbReference type="PRINTS" id="PR01436">
    <property type="entry name" value="NADHDHGNASE2"/>
</dbReference>
<evidence type="ECO:0000250" key="1"/>
<evidence type="ECO:0000255" key="2"/>
<evidence type="ECO:0000305" key="3"/>
<accession>Q94V92</accession>
<protein>
    <recommendedName>
        <fullName>NADH-ubiquinone oxidoreductase chain 2</fullName>
        <ecNumber>7.1.1.2</ecNumber>
    </recommendedName>
    <alternativeName>
        <fullName>NADH dehydrogenase subunit 2</fullName>
    </alternativeName>
</protein>
<organism>
    <name type="scientific">Varanus timorensis</name>
    <name type="common">Timor monitor</name>
    <dbReference type="NCBI Taxonomy" id="62053"/>
    <lineage>
        <taxon>Eukaryota</taxon>
        <taxon>Metazoa</taxon>
        <taxon>Chordata</taxon>
        <taxon>Craniata</taxon>
        <taxon>Vertebrata</taxon>
        <taxon>Euteleostomi</taxon>
        <taxon>Lepidosauria</taxon>
        <taxon>Squamata</taxon>
        <taxon>Bifurcata</taxon>
        <taxon>Unidentata</taxon>
        <taxon>Episquamata</taxon>
        <taxon>Toxicofera</taxon>
        <taxon>Anguimorpha</taxon>
        <taxon>Paleoanguimorpha</taxon>
        <taxon>Varanoidea</taxon>
        <taxon>Varanidae</taxon>
        <taxon>Varanus</taxon>
    </lineage>
</organism>
<gene>
    <name type="primary">MT-ND2</name>
    <name type="synonym">MTND2</name>
    <name type="synonym">NADH2</name>
    <name type="synonym">ND2</name>
</gene>